<reference key="1">
    <citation type="submission" date="2008-08" db="EMBL/GenBank/DDBJ databases">
        <title>The complete genome sequence of Thermodesulfovibrio yellowstonii strain ATCC 51303 / DSM 11347 / YP87.</title>
        <authorList>
            <person name="Dodson R.J."/>
            <person name="Durkin A.S."/>
            <person name="Wu M."/>
            <person name="Eisen J."/>
            <person name="Sutton G."/>
        </authorList>
    </citation>
    <scope>NUCLEOTIDE SEQUENCE [LARGE SCALE GENOMIC DNA]</scope>
    <source>
        <strain>ATCC 51303 / DSM 11347 / YP87</strain>
    </source>
</reference>
<evidence type="ECO:0000255" key="1">
    <source>
        <dbReference type="HAMAP-Rule" id="MF_01358"/>
    </source>
</evidence>
<proteinExistence type="inferred from homology"/>
<comment type="function">
    <text evidence="1">NDH-1 shuttles electrons from NADH, via FMN and iron-sulfur (Fe-S) centers, to quinones in the respiratory chain. The immediate electron acceptor for the enzyme in this species is believed to be ubiquinone. Couples the redox reaction to proton translocation (for every two electrons transferred, four hydrogen ions are translocated across the cytoplasmic membrane), and thus conserves the redox energy in a proton gradient.</text>
</comment>
<comment type="catalytic activity">
    <reaction evidence="1">
        <text>a quinone + NADH + 5 H(+)(in) = a quinol + NAD(+) + 4 H(+)(out)</text>
        <dbReference type="Rhea" id="RHEA:57888"/>
        <dbReference type="ChEBI" id="CHEBI:15378"/>
        <dbReference type="ChEBI" id="CHEBI:24646"/>
        <dbReference type="ChEBI" id="CHEBI:57540"/>
        <dbReference type="ChEBI" id="CHEBI:57945"/>
        <dbReference type="ChEBI" id="CHEBI:132124"/>
    </reaction>
</comment>
<comment type="subunit">
    <text evidence="1">NDH-1 is composed of 14 different subunits. Subunits NuoB, C, D, E, F, and G constitute the peripheral sector of the complex.</text>
</comment>
<comment type="subcellular location">
    <subcellularLocation>
        <location evidence="1">Cell inner membrane</location>
        <topology evidence="1">Peripheral membrane protein</topology>
        <orientation evidence="1">Cytoplasmic side</orientation>
    </subcellularLocation>
</comment>
<comment type="similarity">
    <text evidence="1">Belongs to the complex I 49 kDa subunit family.</text>
</comment>
<accession>B5YL34</accession>
<organism>
    <name type="scientific">Thermodesulfovibrio yellowstonii (strain ATCC 51303 / DSM 11347 / YP87)</name>
    <dbReference type="NCBI Taxonomy" id="289376"/>
    <lineage>
        <taxon>Bacteria</taxon>
        <taxon>Pseudomonadati</taxon>
        <taxon>Nitrospirota</taxon>
        <taxon>Thermodesulfovibrionia</taxon>
        <taxon>Thermodesulfovibrionales</taxon>
        <taxon>Thermodesulfovibrionaceae</taxon>
        <taxon>Thermodesulfovibrio</taxon>
    </lineage>
</organism>
<feature type="chain" id="PRO_0000371942" description="NADH-quinone oxidoreductase subunit D 2">
    <location>
        <begin position="1"/>
        <end position="401"/>
    </location>
</feature>
<keyword id="KW-0997">Cell inner membrane</keyword>
<keyword id="KW-1003">Cell membrane</keyword>
<keyword id="KW-0472">Membrane</keyword>
<keyword id="KW-0520">NAD</keyword>
<keyword id="KW-0874">Quinone</keyword>
<keyword id="KW-1185">Reference proteome</keyword>
<keyword id="KW-1278">Translocase</keyword>
<keyword id="KW-0813">Transport</keyword>
<keyword id="KW-0830">Ubiquinone</keyword>
<gene>
    <name evidence="1" type="primary">nuoD2</name>
    <name type="ordered locus">THEYE_A1125</name>
</gene>
<protein>
    <recommendedName>
        <fullName evidence="1">NADH-quinone oxidoreductase subunit D 2</fullName>
        <ecNumber evidence="1">7.1.1.-</ecNumber>
    </recommendedName>
    <alternativeName>
        <fullName evidence="1">NADH dehydrogenase I subunit D 2</fullName>
    </alternativeName>
    <alternativeName>
        <fullName evidence="1">NDH-1 subunit D 2</fullName>
    </alternativeName>
</protein>
<name>NUOD2_THEYD</name>
<sequence>MGETEIEKVSDTTFVLQMGPHHPATHGVLKLLCEFEGERVINIKPDVGYLHRGVEKLSESKTYPGAMTLTDRLDYISSMTNNIGYCLAVERLMGIEPPPRAKFIRTMVSEMTRLSSHLLWLATHALDIGAMTVFLYAFREREQILQFFEKICGARLTVSYPRIGGVRVDIKEHVLDEIYKFMDLMLIRVDEYETLLTENRIWIARTRGVGVIAPEDAVLLGLTGPALRGSGVYYDIRKQIPYDAYSEIDFEVPLGEKGDTYDRYLCRIREMRQSVLIVKQCIEKMPEGKILSDKSPDIDLPHQAKRKIEPGDSLWNGFIAFSEEKQEIMPKGEIYSAIEAPKGELGFYIVSDGSGRPYRMRVRAPSFIHISAIPKLCEGHLLADVIAIIGTLDIVMGEADR</sequence>
<dbReference type="EC" id="7.1.1.-" evidence="1"/>
<dbReference type="EMBL" id="CP001147">
    <property type="protein sequence ID" value="ACI20980.1"/>
    <property type="molecule type" value="Genomic_DNA"/>
</dbReference>
<dbReference type="RefSeq" id="WP_012545708.1">
    <property type="nucleotide sequence ID" value="NC_011296.1"/>
</dbReference>
<dbReference type="RefSeq" id="YP_002248949.1">
    <property type="nucleotide sequence ID" value="NC_011296.1"/>
</dbReference>
<dbReference type="SMR" id="B5YL34"/>
<dbReference type="FunCoup" id="B5YL34">
    <property type="interactions" value="296"/>
</dbReference>
<dbReference type="STRING" id="289376.THEYE_A1125"/>
<dbReference type="EnsemblBacteria" id="ACI20980">
    <property type="protein sequence ID" value="ACI20980"/>
    <property type="gene ID" value="THEYE_A1125"/>
</dbReference>
<dbReference type="KEGG" id="tye:THEYE_A1125"/>
<dbReference type="PATRIC" id="fig|289376.4.peg.1103"/>
<dbReference type="eggNOG" id="COG0649">
    <property type="taxonomic scope" value="Bacteria"/>
</dbReference>
<dbReference type="HOGENOM" id="CLU_015134_1_2_0"/>
<dbReference type="InParanoid" id="B5YL34"/>
<dbReference type="OrthoDB" id="9801496at2"/>
<dbReference type="Proteomes" id="UP000000718">
    <property type="component" value="Chromosome"/>
</dbReference>
<dbReference type="GO" id="GO:0005886">
    <property type="term" value="C:plasma membrane"/>
    <property type="evidence" value="ECO:0007669"/>
    <property type="project" value="UniProtKB-SubCell"/>
</dbReference>
<dbReference type="GO" id="GO:0051287">
    <property type="term" value="F:NAD binding"/>
    <property type="evidence" value="ECO:0007669"/>
    <property type="project" value="InterPro"/>
</dbReference>
<dbReference type="GO" id="GO:0050136">
    <property type="term" value="F:NADH:ubiquinone reductase (non-electrogenic) activity"/>
    <property type="evidence" value="ECO:0007669"/>
    <property type="project" value="UniProtKB-UniRule"/>
</dbReference>
<dbReference type="GO" id="GO:0048038">
    <property type="term" value="F:quinone binding"/>
    <property type="evidence" value="ECO:0007669"/>
    <property type="project" value="UniProtKB-KW"/>
</dbReference>
<dbReference type="Gene3D" id="1.10.645.10">
    <property type="entry name" value="Cytochrome-c3 Hydrogenase, chain B"/>
    <property type="match status" value="1"/>
</dbReference>
<dbReference type="HAMAP" id="MF_01358">
    <property type="entry name" value="NDH1_NuoD"/>
    <property type="match status" value="1"/>
</dbReference>
<dbReference type="InterPro" id="IPR001135">
    <property type="entry name" value="NADH_Q_OxRdtase_suD"/>
</dbReference>
<dbReference type="InterPro" id="IPR014029">
    <property type="entry name" value="NADH_UbQ_OxRdtase_49kDa_CS"/>
</dbReference>
<dbReference type="InterPro" id="IPR022885">
    <property type="entry name" value="NDH1_su_D/H"/>
</dbReference>
<dbReference type="InterPro" id="IPR029014">
    <property type="entry name" value="NiFe-Hase_large"/>
</dbReference>
<dbReference type="NCBIfam" id="TIGR01962">
    <property type="entry name" value="NuoD"/>
    <property type="match status" value="1"/>
</dbReference>
<dbReference type="NCBIfam" id="NF004739">
    <property type="entry name" value="PRK06075.1"/>
    <property type="match status" value="1"/>
</dbReference>
<dbReference type="PANTHER" id="PTHR11993:SF10">
    <property type="entry name" value="NADH DEHYDROGENASE [UBIQUINONE] IRON-SULFUR PROTEIN 2, MITOCHONDRIAL"/>
    <property type="match status" value="1"/>
</dbReference>
<dbReference type="PANTHER" id="PTHR11993">
    <property type="entry name" value="NADH-UBIQUINONE OXIDOREDUCTASE 49 KDA SUBUNIT"/>
    <property type="match status" value="1"/>
</dbReference>
<dbReference type="Pfam" id="PF00346">
    <property type="entry name" value="Complex1_49kDa"/>
    <property type="match status" value="1"/>
</dbReference>
<dbReference type="SUPFAM" id="SSF56762">
    <property type="entry name" value="HydB/Nqo4-like"/>
    <property type="match status" value="1"/>
</dbReference>
<dbReference type="PROSITE" id="PS00535">
    <property type="entry name" value="COMPLEX1_49K"/>
    <property type="match status" value="1"/>
</dbReference>